<protein>
    <recommendedName>
        <fullName evidence="1">Phosphatidylserine decarboxylase proenzyme</fullName>
        <ecNumber evidence="1">4.1.1.65</ecNumber>
    </recommendedName>
    <component>
        <recommendedName>
            <fullName evidence="1">Phosphatidylserine decarboxylase alpha chain</fullName>
        </recommendedName>
    </component>
    <component>
        <recommendedName>
            <fullName evidence="1">Phosphatidylserine decarboxylase beta chain</fullName>
        </recommendedName>
    </component>
</protein>
<comment type="function">
    <text evidence="1">Catalyzes the formation of phosphatidylethanolamine (PtdEtn) from phosphatidylserine (PtdSer).</text>
</comment>
<comment type="catalytic activity">
    <reaction evidence="1">
        <text>a 1,2-diacyl-sn-glycero-3-phospho-L-serine + H(+) = a 1,2-diacyl-sn-glycero-3-phosphoethanolamine + CO2</text>
        <dbReference type="Rhea" id="RHEA:20828"/>
        <dbReference type="ChEBI" id="CHEBI:15378"/>
        <dbReference type="ChEBI" id="CHEBI:16526"/>
        <dbReference type="ChEBI" id="CHEBI:57262"/>
        <dbReference type="ChEBI" id="CHEBI:64612"/>
        <dbReference type="EC" id="4.1.1.65"/>
    </reaction>
</comment>
<comment type="cofactor">
    <cofactor evidence="1">
        <name>pyruvate</name>
        <dbReference type="ChEBI" id="CHEBI:15361"/>
    </cofactor>
    <text evidence="1">Binds 1 pyruvoyl group covalently per subunit.</text>
</comment>
<comment type="pathway">
    <text evidence="1">Phospholipid metabolism; phosphatidylethanolamine biosynthesis; phosphatidylethanolamine from CDP-diacylglycerol: step 2/2.</text>
</comment>
<comment type="subunit">
    <text evidence="1">Heterodimer of a large membrane-associated beta subunit and a small pyruvoyl-containing alpha subunit.</text>
</comment>
<comment type="subcellular location">
    <subcellularLocation>
        <location evidence="1">Cell membrane</location>
        <topology evidence="1">Peripheral membrane protein</topology>
    </subcellularLocation>
</comment>
<comment type="PTM">
    <text evidence="1">Is synthesized initially as an inactive proenzyme. Formation of the active enzyme involves a self-maturation process in which the active site pyruvoyl group is generated from an internal serine residue via an autocatalytic post-translational modification. Two non-identical subunits are generated from the proenzyme in this reaction, and the pyruvate is formed at the N-terminus of the alpha chain, which is derived from the carboxyl end of the proenzyme. The post-translation cleavage follows an unusual pathway, termed non-hydrolytic serinolysis, in which the side chain hydroxyl group of the serine supplies its oxygen atom to form the C-terminus of the beta chain, while the remainder of the serine residue undergoes an oxidative deamination to produce ammonia and the pyruvoyl prosthetic group on the alpha chain.</text>
</comment>
<comment type="similarity">
    <text evidence="1">Belongs to the phosphatidylserine decarboxylase family. PSD-A subfamily.</text>
</comment>
<name>PSD_MYCTU</name>
<evidence type="ECO:0000255" key="1">
    <source>
        <dbReference type="HAMAP-Rule" id="MF_00664"/>
    </source>
</evidence>
<reference key="1">
    <citation type="journal article" date="1998" name="Nature">
        <title>Deciphering the biology of Mycobacterium tuberculosis from the complete genome sequence.</title>
        <authorList>
            <person name="Cole S.T."/>
            <person name="Brosch R."/>
            <person name="Parkhill J."/>
            <person name="Garnier T."/>
            <person name="Churcher C.M."/>
            <person name="Harris D.E."/>
            <person name="Gordon S.V."/>
            <person name="Eiglmeier K."/>
            <person name="Gas S."/>
            <person name="Barry C.E. III"/>
            <person name="Tekaia F."/>
            <person name="Badcock K."/>
            <person name="Basham D."/>
            <person name="Brown D."/>
            <person name="Chillingworth T."/>
            <person name="Connor R."/>
            <person name="Davies R.M."/>
            <person name="Devlin K."/>
            <person name="Feltwell T."/>
            <person name="Gentles S."/>
            <person name="Hamlin N."/>
            <person name="Holroyd S."/>
            <person name="Hornsby T."/>
            <person name="Jagels K."/>
            <person name="Krogh A."/>
            <person name="McLean J."/>
            <person name="Moule S."/>
            <person name="Murphy L.D."/>
            <person name="Oliver S."/>
            <person name="Osborne J."/>
            <person name="Quail M.A."/>
            <person name="Rajandream M.A."/>
            <person name="Rogers J."/>
            <person name="Rutter S."/>
            <person name="Seeger K."/>
            <person name="Skelton S."/>
            <person name="Squares S."/>
            <person name="Squares R."/>
            <person name="Sulston J.E."/>
            <person name="Taylor K."/>
            <person name="Whitehead S."/>
            <person name="Barrell B.G."/>
        </authorList>
    </citation>
    <scope>NUCLEOTIDE SEQUENCE [LARGE SCALE GENOMIC DNA]</scope>
    <source>
        <strain>ATCC 25618 / H37Rv</strain>
    </source>
</reference>
<reference key="2">
    <citation type="journal article" date="2011" name="Mol. Cell. Proteomics">
        <title>Proteogenomic analysis of Mycobacterium tuberculosis by high resolution mass spectrometry.</title>
        <authorList>
            <person name="Kelkar D.S."/>
            <person name="Kumar D."/>
            <person name="Kumar P."/>
            <person name="Balakrishnan L."/>
            <person name="Muthusamy B."/>
            <person name="Yadav A.K."/>
            <person name="Shrivastava P."/>
            <person name="Marimuthu A."/>
            <person name="Anand S."/>
            <person name="Sundaram H."/>
            <person name="Kingsbury R."/>
            <person name="Harsha H.C."/>
            <person name="Nair B."/>
            <person name="Prasad T.S."/>
            <person name="Chauhan D.S."/>
            <person name="Katoch K."/>
            <person name="Katoch V.M."/>
            <person name="Kumar P."/>
            <person name="Chaerkady R."/>
            <person name="Ramachandran S."/>
            <person name="Dash D."/>
            <person name="Pandey A."/>
        </authorList>
    </citation>
    <scope>IDENTIFICATION BY MASS SPECTROMETRY [LARGE SCALE ANALYSIS]</scope>
    <source>
        <strain>ATCC 25618 / H37Rv</strain>
    </source>
</reference>
<gene>
    <name evidence="1" type="primary">psd</name>
    <name type="ordered locus">Rv0437c</name>
    <name type="ORF">MTV037.01c</name>
</gene>
<keyword id="KW-1003">Cell membrane</keyword>
<keyword id="KW-0210">Decarboxylase</keyword>
<keyword id="KW-0444">Lipid biosynthesis</keyword>
<keyword id="KW-0443">Lipid metabolism</keyword>
<keyword id="KW-0456">Lyase</keyword>
<keyword id="KW-0472">Membrane</keyword>
<keyword id="KW-0594">Phospholipid biosynthesis</keyword>
<keyword id="KW-1208">Phospholipid metabolism</keyword>
<keyword id="KW-0670">Pyruvate</keyword>
<keyword id="KW-1185">Reference proteome</keyword>
<keyword id="KW-0865">Zymogen</keyword>
<sequence length="231" mass="24260">MARRPRPDGPQHLLALVRSAVPPVHPAGRPFIAAGLAIAAVGHRYRWLRGTGLLAAAACAGFFRHPQRVPPTRPAAIVAPADGVICAIDSAAPPAELSMGDTPLPRVSIFLSILDAHVQRAPVSGEVIAVQHRPGRFGSADLPEASDDNERTSVRIRMPNGAEVVAVQIAGLVARRIVCDAHVGDKLAIGDTYGLIRFGSRLDTYLPAGAEPIVNVGQRAVAGETVLAECR</sequence>
<proteinExistence type="evidence at protein level"/>
<feature type="chain" id="PRO_0000029779" description="Phosphatidylserine decarboxylase beta chain" evidence="1">
    <location>
        <begin position="1"/>
        <end position="199"/>
    </location>
</feature>
<feature type="chain" id="PRO_0000029780" description="Phosphatidylserine decarboxylase alpha chain" evidence="1">
    <location>
        <begin position="200"/>
        <end position="231"/>
    </location>
</feature>
<feature type="active site" description="Schiff-base intermediate with substrate; via pyruvic acid" evidence="1">
    <location>
        <position position="200"/>
    </location>
</feature>
<feature type="site" description="Cleavage (non-hydrolytic); by autocatalysis" evidence="1">
    <location>
        <begin position="199"/>
        <end position="200"/>
    </location>
</feature>
<feature type="modified residue" description="Pyruvic acid (Ser); by autocatalysis" evidence="1">
    <location>
        <position position="200"/>
    </location>
</feature>
<dbReference type="EC" id="4.1.1.65" evidence="1"/>
<dbReference type="EMBL" id="AL123456">
    <property type="protein sequence ID" value="CCP43168.1"/>
    <property type="molecule type" value="Genomic_DNA"/>
</dbReference>
<dbReference type="PIR" id="C70632">
    <property type="entry name" value="C70632"/>
</dbReference>
<dbReference type="RefSeq" id="NP_214951.1">
    <property type="nucleotide sequence ID" value="NC_000962.3"/>
</dbReference>
<dbReference type="RefSeq" id="WP_003402216.1">
    <property type="nucleotide sequence ID" value="NZ_NVQJ01000002.1"/>
</dbReference>
<dbReference type="SMR" id="P9WHQ5"/>
<dbReference type="STRING" id="83332.Rv0437c"/>
<dbReference type="PaxDb" id="83332-Rv0437c"/>
<dbReference type="GeneID" id="886350"/>
<dbReference type="KEGG" id="mtu:Rv0437c"/>
<dbReference type="KEGG" id="mtv:RVBD_0437c"/>
<dbReference type="TubercuList" id="Rv0437c"/>
<dbReference type="eggNOG" id="COG0688">
    <property type="taxonomic scope" value="Bacteria"/>
</dbReference>
<dbReference type="InParanoid" id="P9WHQ5"/>
<dbReference type="OrthoDB" id="9790893at2"/>
<dbReference type="PhylomeDB" id="P9WHQ5"/>
<dbReference type="UniPathway" id="UPA00558">
    <property type="reaction ID" value="UER00616"/>
</dbReference>
<dbReference type="Proteomes" id="UP000001584">
    <property type="component" value="Chromosome"/>
</dbReference>
<dbReference type="GO" id="GO:0005886">
    <property type="term" value="C:plasma membrane"/>
    <property type="evidence" value="ECO:0007005"/>
    <property type="project" value="MTBBASE"/>
</dbReference>
<dbReference type="GO" id="GO:0004609">
    <property type="term" value="F:phosphatidylserine decarboxylase activity"/>
    <property type="evidence" value="ECO:0007669"/>
    <property type="project" value="UniProtKB-UniRule"/>
</dbReference>
<dbReference type="GO" id="GO:0006646">
    <property type="term" value="P:phosphatidylethanolamine biosynthetic process"/>
    <property type="evidence" value="ECO:0007669"/>
    <property type="project" value="UniProtKB-UniRule"/>
</dbReference>
<dbReference type="HAMAP" id="MF_00664">
    <property type="entry name" value="PS_decarb_PSD_A"/>
    <property type="match status" value="1"/>
</dbReference>
<dbReference type="InterPro" id="IPR003817">
    <property type="entry name" value="PS_Dcarbxylase"/>
</dbReference>
<dbReference type="InterPro" id="IPR033175">
    <property type="entry name" value="PSD-A"/>
</dbReference>
<dbReference type="NCBIfam" id="NF003679">
    <property type="entry name" value="PRK05305.1-3"/>
    <property type="match status" value="1"/>
</dbReference>
<dbReference type="PANTHER" id="PTHR35809">
    <property type="entry name" value="ARCHAETIDYLSERINE DECARBOXYLASE PROENZYME-RELATED"/>
    <property type="match status" value="1"/>
</dbReference>
<dbReference type="PANTHER" id="PTHR35809:SF1">
    <property type="entry name" value="ARCHAETIDYLSERINE DECARBOXYLASE PROENZYME-RELATED"/>
    <property type="match status" value="1"/>
</dbReference>
<dbReference type="Pfam" id="PF02666">
    <property type="entry name" value="PS_Dcarbxylase"/>
    <property type="match status" value="1"/>
</dbReference>
<accession>P9WHQ5</accession>
<accession>L0T6G6</accession>
<accession>O86324</accession>
<accession>P67547</accession>
<organism>
    <name type="scientific">Mycobacterium tuberculosis (strain ATCC 25618 / H37Rv)</name>
    <dbReference type="NCBI Taxonomy" id="83332"/>
    <lineage>
        <taxon>Bacteria</taxon>
        <taxon>Bacillati</taxon>
        <taxon>Actinomycetota</taxon>
        <taxon>Actinomycetes</taxon>
        <taxon>Mycobacteriales</taxon>
        <taxon>Mycobacteriaceae</taxon>
        <taxon>Mycobacterium</taxon>
        <taxon>Mycobacterium tuberculosis complex</taxon>
    </lineage>
</organism>